<feature type="initiator methionine" description="Removed" evidence="2">
    <location>
        <position position="1"/>
    </location>
</feature>
<feature type="chain" id="PRO_0000146119" description="Epidermal growth factor receptor substrate 15-like 1">
    <location>
        <begin position="2"/>
        <end position="907"/>
    </location>
</feature>
<feature type="domain" description="EH 1" evidence="4">
    <location>
        <begin position="15"/>
        <end position="104"/>
    </location>
</feature>
<feature type="domain" description="EF-hand 1" evidence="6">
    <location>
        <begin position="48"/>
        <end position="83"/>
    </location>
</feature>
<feature type="domain" description="EH 2" evidence="4">
    <location>
        <begin position="127"/>
        <end position="215"/>
    </location>
</feature>
<feature type="domain" description="EF-hand 2" evidence="6">
    <location>
        <begin position="159"/>
        <end position="194"/>
    </location>
</feature>
<feature type="domain" description="EF-hand 3" evidence="6">
    <location>
        <begin position="272"/>
        <end position="307"/>
    </location>
</feature>
<feature type="domain" description="EH 3" evidence="4">
    <location>
        <begin position="273"/>
        <end position="363"/>
    </location>
</feature>
<feature type="domain" description="EF-hand 4" evidence="6">
    <location>
        <begin position="308"/>
        <end position="341"/>
    </location>
</feature>
<feature type="domain" description="UIM 1" evidence="5">
    <location>
        <begin position="863"/>
        <end position="882"/>
    </location>
</feature>
<feature type="domain" description="UIM 2" evidence="5">
    <location>
        <begin position="889"/>
        <end position="907"/>
    </location>
</feature>
<feature type="region of interest" description="Interaction with DAB2" evidence="9">
    <location>
        <begin position="15"/>
        <end position="368"/>
    </location>
</feature>
<feature type="region of interest" description="Disordered" evidence="7">
    <location>
        <begin position="229"/>
        <end position="260"/>
    </location>
</feature>
<feature type="region of interest" description="Disordered" evidence="7">
    <location>
        <begin position="611"/>
        <end position="860"/>
    </location>
</feature>
<feature type="coiled-coil region" evidence="3">
    <location>
        <begin position="384"/>
        <end position="551"/>
    </location>
</feature>
<feature type="compositionally biased region" description="Low complexity" evidence="7">
    <location>
        <begin position="241"/>
        <end position="255"/>
    </location>
</feature>
<feature type="compositionally biased region" description="Basic and acidic residues" evidence="7">
    <location>
        <begin position="622"/>
        <end position="636"/>
    </location>
</feature>
<feature type="compositionally biased region" description="Polar residues" evidence="7">
    <location>
        <begin position="643"/>
        <end position="652"/>
    </location>
</feature>
<feature type="compositionally biased region" description="Polar residues" evidence="7">
    <location>
        <begin position="682"/>
        <end position="696"/>
    </location>
</feature>
<feature type="compositionally biased region" description="Low complexity" evidence="7">
    <location>
        <begin position="703"/>
        <end position="743"/>
    </location>
</feature>
<feature type="compositionally biased region" description="Pro residues" evidence="7">
    <location>
        <begin position="776"/>
        <end position="790"/>
    </location>
</feature>
<feature type="compositionally biased region" description="Polar residues" evidence="7">
    <location>
        <begin position="791"/>
        <end position="802"/>
    </location>
</feature>
<feature type="compositionally biased region" description="Low complexity" evidence="7">
    <location>
        <begin position="840"/>
        <end position="853"/>
    </location>
</feature>
<feature type="binding site" evidence="6">
    <location>
        <position position="172"/>
    </location>
    <ligand>
        <name>Ca(2+)</name>
        <dbReference type="ChEBI" id="CHEBI:29108"/>
    </ligand>
</feature>
<feature type="binding site" evidence="6">
    <location>
        <position position="174"/>
    </location>
    <ligand>
        <name>Ca(2+)</name>
        <dbReference type="ChEBI" id="CHEBI:29108"/>
    </ligand>
</feature>
<feature type="binding site" evidence="6">
    <location>
        <position position="176"/>
    </location>
    <ligand>
        <name>Ca(2+)</name>
        <dbReference type="ChEBI" id="CHEBI:29108"/>
    </ligand>
</feature>
<feature type="binding site" evidence="6">
    <location>
        <position position="178"/>
    </location>
    <ligand>
        <name>Ca(2+)</name>
        <dbReference type="ChEBI" id="CHEBI:29108"/>
    </ligand>
</feature>
<feature type="binding site" evidence="6">
    <location>
        <position position="183"/>
    </location>
    <ligand>
        <name>Ca(2+)</name>
        <dbReference type="ChEBI" id="CHEBI:29108"/>
    </ligand>
</feature>
<feature type="modified residue" description="N-acetylalanine" evidence="2">
    <location>
        <position position="2"/>
    </location>
</feature>
<feature type="modified residue" description="Phosphotyrosine" evidence="15">
    <location>
        <position position="74"/>
    </location>
</feature>
<feature type="modified residue" description="Phosphoserine" evidence="18">
    <location>
        <position position="107"/>
    </location>
</feature>
<feature type="modified residue" description="Phosphoserine" evidence="17 18">
    <location>
        <position position="108"/>
    </location>
</feature>
<feature type="modified residue" description="Phosphoserine" evidence="2">
    <location>
        <position position="229"/>
    </location>
</feature>
<feature type="modified residue" description="Phosphoserine" evidence="16 18">
    <location>
        <position position="244"/>
    </location>
</feature>
<feature type="modified residue" description="Phosphoserine" evidence="18">
    <location>
        <position position="253"/>
    </location>
</feature>
<feature type="modified residue" description="Phosphoserine" evidence="16 18">
    <location>
        <position position="255"/>
    </location>
</feature>
<feature type="modified residue" description="Phosphoserine" evidence="2">
    <location>
        <position position="259"/>
    </location>
</feature>
<feature type="modified residue" description="Phosphoserine" evidence="18">
    <location>
        <position position="360"/>
    </location>
</feature>
<feature type="modified residue" description="Phosphothreonine" evidence="18">
    <location>
        <position position="364"/>
    </location>
</feature>
<feature type="modified residue" description="Phosphoserine" evidence="2">
    <location>
        <position position="369"/>
    </location>
</feature>
<feature type="modified residue" description="Phosphoserine" evidence="2">
    <location>
        <position position="375"/>
    </location>
</feature>
<feature type="modified residue" description="Phosphoserine" evidence="2">
    <location>
        <position position="558"/>
    </location>
</feature>
<feature type="modified residue" description="Phosphotyrosine" evidence="14">
    <location>
        <position position="562"/>
    </location>
</feature>
<feature type="modified residue" description="Phosphoserine" evidence="18">
    <location>
        <position position="610"/>
    </location>
</feature>
<feature type="modified residue" description="Phosphoserine" evidence="2">
    <location>
        <position position="664"/>
    </location>
</feature>
<feature type="modified residue" description="Phosphoserine" evidence="2">
    <location>
        <position position="670"/>
    </location>
</feature>
<feature type="modified residue" description="Phosphoserine" evidence="2">
    <location>
        <position position="695"/>
    </location>
</feature>
<feature type="modified residue" description="Phosphoserine" evidence="2">
    <location>
        <position position="715"/>
    </location>
</feature>
<feature type="modified residue" description="Phosphoserine" evidence="2">
    <location>
        <position position="732"/>
    </location>
</feature>
<feature type="modified residue" description="Phosphoserine" evidence="2">
    <location>
        <position position="791"/>
    </location>
</feature>
<feature type="modified residue" description="Phosphothreonine" evidence="2">
    <location>
        <position position="795"/>
    </location>
</feature>
<feature type="splice variant" id="VSP_022638" description="In isoform 4." evidence="12">
    <location>
        <begin position="565"/>
        <end position="595"/>
    </location>
</feature>
<feature type="splice variant" id="VSP_010681" description="In isoform 3." evidence="11 12">
    <original>DDPF</original>
    <variation>VKVE</variation>
    <location>
        <begin position="596"/>
        <end position="599"/>
    </location>
</feature>
<feature type="splice variant" id="VSP_010682" description="In isoform 3." evidence="11 12">
    <location>
        <begin position="600"/>
        <end position="819"/>
    </location>
</feature>
<feature type="splice variant" id="VSP_022639" description="In isoform 4." evidence="12">
    <location>
        <begin position="748"/>
        <end position="860"/>
    </location>
</feature>
<feature type="splice variant" id="VSP_010683" description="In isoform 2." evidence="12">
    <original>STPVSQLGSSDFPESPDPFQPLGADS</original>
    <variation>YASSSRGTRRWGQGGGHRAPPLSSPE</variation>
    <location>
        <begin position="794"/>
        <end position="819"/>
    </location>
</feature>
<feature type="splice variant" id="VSP_010684" description="In isoform 2." evidence="12">
    <location>
        <begin position="820"/>
        <end position="907"/>
    </location>
</feature>
<feature type="sequence conflict" description="In Ref. 1; AAA87202 and 4; AAH15259." evidence="13" ref="1 4">
    <original>G</original>
    <variation>S</variation>
    <location>
        <position position="14"/>
    </location>
</feature>
<feature type="sequence conflict" description="In Ref. 1; AAA87202." evidence="13" ref="1">
    <original>A</original>
    <variation>P</variation>
    <location>
        <position position="29"/>
    </location>
</feature>
<feature type="sequence conflict" description="In Ref. 2; BAE31350." evidence="13" ref="2">
    <original>L</original>
    <variation>V</variation>
    <location>
        <position position="170"/>
    </location>
</feature>
<feature type="sequence conflict" description="In Ref. 1; AAA87202 and 4; AAH15259." evidence="13" ref="1 4">
    <original>R</original>
    <variation>K</variation>
    <location>
        <position position="413"/>
    </location>
</feature>
<feature type="sequence conflict" description="In Ref. 2; BAC29523." evidence="13" ref="2">
    <original>D</original>
    <variation>H</variation>
    <location>
        <position position="726"/>
    </location>
</feature>
<feature type="sequence conflict" description="In Ref. 1; AAA87202." evidence="13" ref="1">
    <original>D</original>
    <variation>E</variation>
    <location>
        <position position="821"/>
    </location>
</feature>
<feature type="sequence conflict" description="In Ref. 1; AAA87202." evidence="13" ref="1">
    <original>T</original>
    <variation>A</variation>
    <location>
        <position position="850"/>
    </location>
</feature>
<organism>
    <name type="scientific">Mus musculus</name>
    <name type="common">Mouse</name>
    <dbReference type="NCBI Taxonomy" id="10090"/>
    <lineage>
        <taxon>Eukaryota</taxon>
        <taxon>Metazoa</taxon>
        <taxon>Chordata</taxon>
        <taxon>Craniata</taxon>
        <taxon>Vertebrata</taxon>
        <taxon>Euteleostomi</taxon>
        <taxon>Mammalia</taxon>
        <taxon>Eutheria</taxon>
        <taxon>Euarchontoglires</taxon>
        <taxon>Glires</taxon>
        <taxon>Rodentia</taxon>
        <taxon>Myomorpha</taxon>
        <taxon>Muroidea</taxon>
        <taxon>Muridae</taxon>
        <taxon>Murinae</taxon>
        <taxon>Mus</taxon>
        <taxon>Mus</taxon>
    </lineage>
</organism>
<reference key="1">
    <citation type="journal article" date="1995" name="Proc. Natl. Acad. Sci. U.S.A.">
        <title>A protein-binding domain, EH, identified in the receptor tyrosine kinase substrate Eps15 and conserved in evolution.</title>
        <authorList>
            <person name="Wong W.T."/>
            <person name="Schumacher C."/>
            <person name="Salcini A.E."/>
            <person name="Romano A."/>
            <person name="Castagnino P."/>
            <person name="Pelicci P.G."/>
            <person name="Di Fiore P."/>
        </authorList>
    </citation>
    <scope>NUCLEOTIDE SEQUENCE [MRNA] (ISOFORM 1)</scope>
    <source>
        <strain>BALB/cJ</strain>
    </source>
</reference>
<reference key="2">
    <citation type="journal article" date="2005" name="Science">
        <title>The transcriptional landscape of the mammalian genome.</title>
        <authorList>
            <person name="Carninci P."/>
            <person name="Kasukawa T."/>
            <person name="Katayama S."/>
            <person name="Gough J."/>
            <person name="Frith M.C."/>
            <person name="Maeda N."/>
            <person name="Oyama R."/>
            <person name="Ravasi T."/>
            <person name="Lenhard B."/>
            <person name="Wells C."/>
            <person name="Kodzius R."/>
            <person name="Shimokawa K."/>
            <person name="Bajic V.B."/>
            <person name="Brenner S.E."/>
            <person name="Batalov S."/>
            <person name="Forrest A.R."/>
            <person name="Zavolan M."/>
            <person name="Davis M.J."/>
            <person name="Wilming L.G."/>
            <person name="Aidinis V."/>
            <person name="Allen J.E."/>
            <person name="Ambesi-Impiombato A."/>
            <person name="Apweiler R."/>
            <person name="Aturaliya R.N."/>
            <person name="Bailey T.L."/>
            <person name="Bansal M."/>
            <person name="Baxter L."/>
            <person name="Beisel K.W."/>
            <person name="Bersano T."/>
            <person name="Bono H."/>
            <person name="Chalk A.M."/>
            <person name="Chiu K.P."/>
            <person name="Choudhary V."/>
            <person name="Christoffels A."/>
            <person name="Clutterbuck D.R."/>
            <person name="Crowe M.L."/>
            <person name="Dalla E."/>
            <person name="Dalrymple B.P."/>
            <person name="de Bono B."/>
            <person name="Della Gatta G."/>
            <person name="di Bernardo D."/>
            <person name="Down T."/>
            <person name="Engstrom P."/>
            <person name="Fagiolini M."/>
            <person name="Faulkner G."/>
            <person name="Fletcher C.F."/>
            <person name="Fukushima T."/>
            <person name="Furuno M."/>
            <person name="Futaki S."/>
            <person name="Gariboldi M."/>
            <person name="Georgii-Hemming P."/>
            <person name="Gingeras T.R."/>
            <person name="Gojobori T."/>
            <person name="Green R.E."/>
            <person name="Gustincich S."/>
            <person name="Harbers M."/>
            <person name="Hayashi Y."/>
            <person name="Hensch T.K."/>
            <person name="Hirokawa N."/>
            <person name="Hill D."/>
            <person name="Huminiecki L."/>
            <person name="Iacono M."/>
            <person name="Ikeo K."/>
            <person name="Iwama A."/>
            <person name="Ishikawa T."/>
            <person name="Jakt M."/>
            <person name="Kanapin A."/>
            <person name="Katoh M."/>
            <person name="Kawasawa Y."/>
            <person name="Kelso J."/>
            <person name="Kitamura H."/>
            <person name="Kitano H."/>
            <person name="Kollias G."/>
            <person name="Krishnan S.P."/>
            <person name="Kruger A."/>
            <person name="Kummerfeld S.K."/>
            <person name="Kurochkin I.V."/>
            <person name="Lareau L.F."/>
            <person name="Lazarevic D."/>
            <person name="Lipovich L."/>
            <person name="Liu J."/>
            <person name="Liuni S."/>
            <person name="McWilliam S."/>
            <person name="Madan Babu M."/>
            <person name="Madera M."/>
            <person name="Marchionni L."/>
            <person name="Matsuda H."/>
            <person name="Matsuzawa S."/>
            <person name="Miki H."/>
            <person name="Mignone F."/>
            <person name="Miyake S."/>
            <person name="Morris K."/>
            <person name="Mottagui-Tabar S."/>
            <person name="Mulder N."/>
            <person name="Nakano N."/>
            <person name="Nakauchi H."/>
            <person name="Ng P."/>
            <person name="Nilsson R."/>
            <person name="Nishiguchi S."/>
            <person name="Nishikawa S."/>
            <person name="Nori F."/>
            <person name="Ohara O."/>
            <person name="Okazaki Y."/>
            <person name="Orlando V."/>
            <person name="Pang K.C."/>
            <person name="Pavan W.J."/>
            <person name="Pavesi G."/>
            <person name="Pesole G."/>
            <person name="Petrovsky N."/>
            <person name="Piazza S."/>
            <person name="Reed J."/>
            <person name="Reid J.F."/>
            <person name="Ring B.Z."/>
            <person name="Ringwald M."/>
            <person name="Rost B."/>
            <person name="Ruan Y."/>
            <person name="Salzberg S.L."/>
            <person name="Sandelin A."/>
            <person name="Schneider C."/>
            <person name="Schoenbach C."/>
            <person name="Sekiguchi K."/>
            <person name="Semple C.A."/>
            <person name="Seno S."/>
            <person name="Sessa L."/>
            <person name="Sheng Y."/>
            <person name="Shibata Y."/>
            <person name="Shimada H."/>
            <person name="Shimada K."/>
            <person name="Silva D."/>
            <person name="Sinclair B."/>
            <person name="Sperling S."/>
            <person name="Stupka E."/>
            <person name="Sugiura K."/>
            <person name="Sultana R."/>
            <person name="Takenaka Y."/>
            <person name="Taki K."/>
            <person name="Tammoja K."/>
            <person name="Tan S.L."/>
            <person name="Tang S."/>
            <person name="Taylor M.S."/>
            <person name="Tegner J."/>
            <person name="Teichmann S.A."/>
            <person name="Ueda H.R."/>
            <person name="van Nimwegen E."/>
            <person name="Verardo R."/>
            <person name="Wei C.L."/>
            <person name="Yagi K."/>
            <person name="Yamanishi H."/>
            <person name="Zabarovsky E."/>
            <person name="Zhu S."/>
            <person name="Zimmer A."/>
            <person name="Hide W."/>
            <person name="Bult C."/>
            <person name="Grimmond S.M."/>
            <person name="Teasdale R.D."/>
            <person name="Liu E.T."/>
            <person name="Brusic V."/>
            <person name="Quackenbush J."/>
            <person name="Wahlestedt C."/>
            <person name="Mattick J.S."/>
            <person name="Hume D.A."/>
            <person name="Kai C."/>
            <person name="Sasaki D."/>
            <person name="Tomaru Y."/>
            <person name="Fukuda S."/>
            <person name="Kanamori-Katayama M."/>
            <person name="Suzuki M."/>
            <person name="Aoki J."/>
            <person name="Arakawa T."/>
            <person name="Iida J."/>
            <person name="Imamura K."/>
            <person name="Itoh M."/>
            <person name="Kato T."/>
            <person name="Kawaji H."/>
            <person name="Kawagashira N."/>
            <person name="Kawashima T."/>
            <person name="Kojima M."/>
            <person name="Kondo S."/>
            <person name="Konno H."/>
            <person name="Nakano K."/>
            <person name="Ninomiya N."/>
            <person name="Nishio T."/>
            <person name="Okada M."/>
            <person name="Plessy C."/>
            <person name="Shibata K."/>
            <person name="Shiraki T."/>
            <person name="Suzuki S."/>
            <person name="Tagami M."/>
            <person name="Waki K."/>
            <person name="Watahiki A."/>
            <person name="Okamura-Oho Y."/>
            <person name="Suzuki H."/>
            <person name="Kawai J."/>
            <person name="Hayashizaki Y."/>
        </authorList>
    </citation>
    <scope>NUCLEOTIDE SEQUENCE [LARGE SCALE MRNA] (ISOFORMS 2; 3 AND 4)</scope>
    <source>
        <strain>C57BL/6J</strain>
        <tissue>Bone</tissue>
        <tissue>Bone marrow</tissue>
        <tissue>Kidney</tissue>
    </source>
</reference>
<reference key="3">
    <citation type="submission" date="2005-07" db="EMBL/GenBank/DDBJ databases">
        <authorList>
            <person name="Mural R.J."/>
            <person name="Adams M.D."/>
            <person name="Myers E.W."/>
            <person name="Smith H.O."/>
            <person name="Venter J.C."/>
        </authorList>
    </citation>
    <scope>NUCLEOTIDE SEQUENCE [LARGE SCALE GENOMIC DNA]</scope>
</reference>
<reference key="4">
    <citation type="journal article" date="2004" name="Genome Res.">
        <title>The status, quality, and expansion of the NIH full-length cDNA project: the Mammalian Gene Collection (MGC).</title>
        <authorList>
            <consortium name="The MGC Project Team"/>
        </authorList>
    </citation>
    <scope>NUCLEOTIDE SEQUENCE [LARGE SCALE MRNA] (ISOFORM 3)</scope>
    <source>
        <tissue>Kidney</tissue>
    </source>
</reference>
<reference key="5">
    <citation type="journal article" date="1998" name="J. Biol. Chem.">
        <title>Eps15R is a tyrosine kinase substrate with characteristics of a docking protein possibly involved in coated pits-mediated internalization.</title>
        <authorList>
            <person name="Coda L."/>
            <person name="Salcini A.E."/>
            <person name="Confalonieri S."/>
            <person name="Pelicci G."/>
            <person name="Sorkina T."/>
            <person name="Sorkin A."/>
            <person name="Pelicci P.G."/>
            <person name="Di Fiore P.P."/>
        </authorList>
    </citation>
    <scope>SUBCELLULAR LOCATION</scope>
    <scope>PHOSPHORYLATION</scope>
    <scope>INTERACTION WITH EPS15; AP-2 COMPLEX; AGFG1 AND AGFG2</scope>
</reference>
<reference key="6">
    <citation type="journal article" date="2005" name="Nat. Biotechnol.">
        <title>Immunoaffinity profiling of tyrosine phosphorylation in cancer cells.</title>
        <authorList>
            <person name="Rush J."/>
            <person name="Moritz A."/>
            <person name="Lee K.A."/>
            <person name="Guo A."/>
            <person name="Goss V.L."/>
            <person name="Spek E.J."/>
            <person name="Zhang H."/>
            <person name="Zha X.-M."/>
            <person name="Polakiewicz R.D."/>
            <person name="Comb M.J."/>
        </authorList>
    </citation>
    <scope>PHOSPHORYLATION [LARGE SCALE ANALYSIS] AT TYR-562</scope>
    <scope>IDENTIFICATION BY MASS SPECTROMETRY [LARGE SCALE ANALYSIS]</scope>
</reference>
<reference key="7">
    <citation type="journal article" date="2006" name="Mol. Cell. Proteomics">
        <title>Comprehensive identification of phosphorylation sites in postsynaptic density preparations.</title>
        <authorList>
            <person name="Trinidad J.C."/>
            <person name="Specht C.G."/>
            <person name="Thalhammer A."/>
            <person name="Schoepfer R."/>
            <person name="Burlingame A.L."/>
        </authorList>
    </citation>
    <scope>PHOSPHORYLATION [LARGE SCALE ANALYSIS] AT TYR-74</scope>
    <scope>IDENTIFICATION BY MASS SPECTROMETRY [LARGE SCALE ANALYSIS]</scope>
    <source>
        <tissue>Brain</tissue>
    </source>
</reference>
<reference key="8">
    <citation type="journal article" date="2007" name="Mol. Cell. Proteomics">
        <title>Qualitative and quantitative analyses of protein phosphorylation in naive and stimulated mouse synaptosomal preparations.</title>
        <authorList>
            <person name="Munton R.P."/>
            <person name="Tweedie-Cullen R."/>
            <person name="Livingstone-Zatchej M."/>
            <person name="Weinandy F."/>
            <person name="Waidelich M."/>
            <person name="Longo D."/>
            <person name="Gehrig P."/>
            <person name="Potthast F."/>
            <person name="Rutishauser D."/>
            <person name="Gerrits B."/>
            <person name="Panse C."/>
            <person name="Schlapbach R."/>
            <person name="Mansuy I.M."/>
        </authorList>
    </citation>
    <scope>IDENTIFICATION BY MASS SPECTROMETRY [LARGE SCALE ANALYSIS]</scope>
    <source>
        <tissue>Brain cortex</tissue>
    </source>
</reference>
<reference key="9">
    <citation type="journal article" date="2007" name="Proc. Natl. Acad. Sci. U.S.A.">
        <title>Large-scale phosphorylation analysis of mouse liver.</title>
        <authorList>
            <person name="Villen J."/>
            <person name="Beausoleil S.A."/>
            <person name="Gerber S.A."/>
            <person name="Gygi S.P."/>
        </authorList>
    </citation>
    <scope>PHOSPHORYLATION [LARGE SCALE ANALYSIS] AT SER-244 AND SER-255</scope>
    <scope>IDENTIFICATION BY MASS SPECTROMETRY [LARGE SCALE ANALYSIS]</scope>
    <source>
        <tissue>Liver</tissue>
    </source>
</reference>
<reference key="10">
    <citation type="journal article" date="2009" name="Immunity">
        <title>The phagosomal proteome in interferon-gamma-activated macrophages.</title>
        <authorList>
            <person name="Trost M."/>
            <person name="English L."/>
            <person name="Lemieux S."/>
            <person name="Courcelles M."/>
            <person name="Desjardins M."/>
            <person name="Thibault P."/>
        </authorList>
    </citation>
    <scope>PHOSPHORYLATION [LARGE SCALE ANALYSIS] AT SER-108</scope>
    <scope>IDENTIFICATION BY MASS SPECTROMETRY [LARGE SCALE ANALYSIS]</scope>
</reference>
<reference key="11">
    <citation type="journal article" date="2010" name="Cell">
        <title>A tissue-specific atlas of mouse protein phosphorylation and expression.</title>
        <authorList>
            <person name="Huttlin E.L."/>
            <person name="Jedrychowski M.P."/>
            <person name="Elias J.E."/>
            <person name="Goswami T."/>
            <person name="Rad R."/>
            <person name="Beausoleil S.A."/>
            <person name="Villen J."/>
            <person name="Haas W."/>
            <person name="Sowa M.E."/>
            <person name="Gygi S.P."/>
        </authorList>
    </citation>
    <scope>PHOSPHORYLATION [LARGE SCALE ANALYSIS] AT SER-107; SER-108; SER-244; SER-253; SER-255; SER-360; THR-364 AND SER-610</scope>
    <scope>IDENTIFICATION BY MASS SPECTROMETRY [LARGE SCALE ANALYSIS]</scope>
    <source>
        <tissue>Brain</tissue>
        <tissue>Brown adipose tissue</tissue>
        <tissue>Heart</tissue>
        <tissue>Kidney</tissue>
        <tissue>Liver</tissue>
        <tissue>Lung</tissue>
        <tissue>Pancreas</tissue>
        <tissue>Spleen</tissue>
        <tissue>Testis</tissue>
    </source>
</reference>
<reference key="12">
    <citation type="journal article" date="2010" name="Science">
        <title>FCHo proteins are nucleators of clathrin-mediated endocytosis.</title>
        <authorList>
            <person name="Henne W.M."/>
            <person name="Boucrot E."/>
            <person name="Meinecke M."/>
            <person name="Evergren E."/>
            <person name="Vallis Y."/>
            <person name="Mittal R."/>
            <person name="McMahon H.T."/>
        </authorList>
    </citation>
    <scope>INTERACTION WITH FCHO2</scope>
</reference>
<reference key="13">
    <citation type="journal article" date="2012" name="Mol. Biol. Cell">
        <title>The clathrin adaptor Dab2 recruits EH domain scaffold proteins to regulate integrin beta1 endocytosis.</title>
        <authorList>
            <person name="Teckchandani A."/>
            <person name="Mulkearns E.E."/>
            <person name="Randolph T.W."/>
            <person name="Toida N."/>
            <person name="Cooper J.A."/>
        </authorList>
    </citation>
    <scope>INTERACTION WITH DAB2</scope>
</reference>
<sequence length="907" mass="99309">MAAPLVPLSQQIPGGNPLYESYYKQVDPAYTGRVGASEAALFLKKSGLSDIILGKIWDLADPEGKGFLDKQGFYVALRLVACAQSGHEVTLSSLSLTMPPPKFHDTSSPLMATQSSAETHWAVRVEEKAKFDGIFESLLPVNGLLSGDKVKPVLMNSKLPLDVLGRVWDLSDIDKDGHLDRDEFAVAMHLVYRALEKEPVPSILPPPLIPPSKRKKTVFAGAVPVLPASPPPKDSLRSTPSHGSVSSLNSTGSLSPKHSVKQPPVAWVVPVADKMRFDEIFLKTDLDLDGYVSGQEVKEIFMHSGLTQNLLAHIWALADTRQTGKLSKEQFALAMYFIQQKVSKGIDPPQVLSPDMVPPSERGTPIPDSSSTLASGEFTGVKELDDISQEIAQLQREKYSLEQDIREKEEAIRQKTSEVQELQNDLDRETSSLQELEAQKQDAQDRLDEMDQQKAKLRDMLSDVRQKCQDETQTISSLKTQIQSQESDLKSQEDDLNRAKSELNRLQQEETQLEQSIQAGRAQLETILRSLKCTQDDINQARSKLSQLQESHLEAHRSLEQYDQVPDGVSGTSLPDLATLNEGILLAERGGFGAMDDPFKNKALLFSNNSQELHPDPFQAEDPFKSDPFKGADPFKGDPFQSDPFSEQQTAATDPFGGDPFKESDPFHSSSSDDFFKKQTKNDPFTSDPFTKNPSLPSKLDPFESSDPFSSSSISSKGSDPFGTLDPFGSSSFSSAEGFADFSQMSKPPPSGPFSSSLGGTGFSDDPFKSKQDTPALPPKKPAPPRPKPPSGQSTPVSQLGSSDFPESPDPFQPLGADSGDPFQNKKGFGDPFSGKDPFAPSSSAKPPKTSSSGFADFTSFGNEEQQLAWAKRESEKAEQERLARLRRQEQEDLELAIALSKADMPA</sequence>
<dbReference type="EMBL" id="U29156">
    <property type="protein sequence ID" value="AAA87202.1"/>
    <property type="molecule type" value="mRNA"/>
</dbReference>
<dbReference type="EMBL" id="AK036662">
    <property type="protein sequence ID" value="BAC29523.1"/>
    <property type="molecule type" value="mRNA"/>
</dbReference>
<dbReference type="EMBL" id="AK036728">
    <property type="protein sequence ID" value="BAC29554.1"/>
    <property type="molecule type" value="mRNA"/>
</dbReference>
<dbReference type="EMBL" id="AK146781">
    <property type="protein sequence ID" value="BAE27427.1"/>
    <property type="molecule type" value="mRNA"/>
</dbReference>
<dbReference type="EMBL" id="AK152602">
    <property type="protein sequence ID" value="BAE31350.1"/>
    <property type="molecule type" value="mRNA"/>
</dbReference>
<dbReference type="EMBL" id="CH466525">
    <property type="protein sequence ID" value="EDL10796.1"/>
    <property type="molecule type" value="Genomic_DNA"/>
</dbReference>
<dbReference type="EMBL" id="BC015259">
    <property type="protein sequence ID" value="AAH15259.1"/>
    <property type="molecule type" value="mRNA"/>
</dbReference>
<dbReference type="CCDS" id="CCDS52597.1">
    <molecule id="Q60902-1"/>
</dbReference>
<dbReference type="CCDS" id="CCDS85561.1">
    <molecule id="Q60902-4"/>
</dbReference>
<dbReference type="RefSeq" id="NP_001116304.1">
    <property type="nucleotide sequence ID" value="NM_001122832.1"/>
</dbReference>
<dbReference type="RefSeq" id="NP_001276788.1">
    <molecule id="Q60902-4"/>
    <property type="nucleotide sequence ID" value="NM_001289859.1"/>
</dbReference>
<dbReference type="RefSeq" id="NP_031970.2">
    <molecule id="Q60902-1"/>
    <property type="nucleotide sequence ID" value="NM_007944.3"/>
</dbReference>
<dbReference type="SMR" id="Q60902"/>
<dbReference type="BioGRID" id="199490">
    <property type="interactions" value="26"/>
</dbReference>
<dbReference type="FunCoup" id="Q60902">
    <property type="interactions" value="3504"/>
</dbReference>
<dbReference type="IntAct" id="Q60902">
    <property type="interactions" value="8"/>
</dbReference>
<dbReference type="MINT" id="Q60902"/>
<dbReference type="STRING" id="10090.ENSMUSP00000129739"/>
<dbReference type="iPTMnet" id="Q60902"/>
<dbReference type="PhosphoSitePlus" id="Q60902"/>
<dbReference type="SwissPalm" id="Q60902"/>
<dbReference type="jPOST" id="Q60902"/>
<dbReference type="PaxDb" id="10090-ENSMUSP00000129739"/>
<dbReference type="PeptideAtlas" id="Q60902"/>
<dbReference type="ProteomicsDB" id="275924">
    <molecule id="Q60902-1"/>
</dbReference>
<dbReference type="ProteomicsDB" id="275925">
    <molecule id="Q60902-2"/>
</dbReference>
<dbReference type="ProteomicsDB" id="275926">
    <molecule id="Q60902-3"/>
</dbReference>
<dbReference type="ProteomicsDB" id="275927">
    <molecule id="Q60902-4"/>
</dbReference>
<dbReference type="Antibodypedia" id="14142">
    <property type="antibodies" value="208 antibodies from 31 providers"/>
</dbReference>
<dbReference type="DNASU" id="13859"/>
<dbReference type="Ensembl" id="ENSMUST00000163643.3">
    <molecule id="Q60902-1"/>
    <property type="protein sequence ID" value="ENSMUSP00000129739.2"/>
    <property type="gene ID" value="ENSMUSG00000006276.12"/>
</dbReference>
<dbReference type="Ensembl" id="ENSMUST00000212121.2">
    <molecule id="Q60902-4"/>
    <property type="protein sequence ID" value="ENSMUSP00000148468.2"/>
    <property type="gene ID" value="ENSMUSG00000006276.12"/>
</dbReference>
<dbReference type="GeneID" id="13859"/>
<dbReference type="KEGG" id="mmu:13859"/>
<dbReference type="UCSC" id="uc009mfr.3">
    <molecule id="Q60902-1"/>
    <property type="organism name" value="mouse"/>
</dbReference>
<dbReference type="UCSC" id="uc009mfs.3">
    <molecule id="Q60902-4"/>
    <property type="organism name" value="mouse"/>
</dbReference>
<dbReference type="UCSC" id="uc009mft.2">
    <molecule id="Q60902-2"/>
    <property type="organism name" value="mouse"/>
</dbReference>
<dbReference type="UCSC" id="uc009mfu.2">
    <molecule id="Q60902-3"/>
    <property type="organism name" value="mouse"/>
</dbReference>
<dbReference type="AGR" id="MGI:104582"/>
<dbReference type="CTD" id="58513"/>
<dbReference type="MGI" id="MGI:104582">
    <property type="gene designation" value="Eps15l1"/>
</dbReference>
<dbReference type="VEuPathDB" id="HostDB:ENSMUSG00000006276"/>
<dbReference type="eggNOG" id="KOG0998">
    <property type="taxonomic scope" value="Eukaryota"/>
</dbReference>
<dbReference type="GeneTree" id="ENSGT00940000155438"/>
<dbReference type="HOGENOM" id="CLU_007270_1_1_1"/>
<dbReference type="InParanoid" id="Q60902"/>
<dbReference type="OMA" id="AMYLVRQ"/>
<dbReference type="OrthoDB" id="524326at2759"/>
<dbReference type="PhylomeDB" id="Q60902"/>
<dbReference type="TreeFam" id="TF324293"/>
<dbReference type="Reactome" id="R-MMU-182971">
    <property type="pathway name" value="EGFR downregulation"/>
</dbReference>
<dbReference type="Reactome" id="R-MMU-8856825">
    <property type="pathway name" value="Cargo recognition for clathrin-mediated endocytosis"/>
</dbReference>
<dbReference type="Reactome" id="R-MMU-8856828">
    <property type="pathway name" value="Clathrin-mediated endocytosis"/>
</dbReference>
<dbReference type="BioGRID-ORCS" id="13859">
    <property type="hits" value="6 hits in 77 CRISPR screens"/>
</dbReference>
<dbReference type="CD-CODE" id="CE726F99">
    <property type="entry name" value="Postsynaptic density"/>
</dbReference>
<dbReference type="ChiTaRS" id="Eps15l1">
    <property type="organism name" value="mouse"/>
</dbReference>
<dbReference type="PRO" id="PR:Q60902"/>
<dbReference type="Proteomes" id="UP000000589">
    <property type="component" value="Chromosome 8"/>
</dbReference>
<dbReference type="RNAct" id="Q60902">
    <property type="molecule type" value="protein"/>
</dbReference>
<dbReference type="Bgee" id="ENSMUSG00000006276">
    <property type="expression patterns" value="Expressed in undifferentiated genital tubercle and 256 other cell types or tissues"/>
</dbReference>
<dbReference type="ExpressionAtlas" id="Q60902">
    <property type="expression patterns" value="baseline and differential"/>
</dbReference>
<dbReference type="GO" id="GO:0030132">
    <property type="term" value="C:clathrin coat of coated pit"/>
    <property type="evidence" value="ECO:0000314"/>
    <property type="project" value="MGI"/>
</dbReference>
<dbReference type="GO" id="GO:0005634">
    <property type="term" value="C:nucleus"/>
    <property type="evidence" value="ECO:0007669"/>
    <property type="project" value="UniProtKB-SubCell"/>
</dbReference>
<dbReference type="GO" id="GO:0098793">
    <property type="term" value="C:presynapse"/>
    <property type="evidence" value="ECO:0000314"/>
    <property type="project" value="SynGO"/>
</dbReference>
<dbReference type="GO" id="GO:0005509">
    <property type="term" value="F:calcium ion binding"/>
    <property type="evidence" value="ECO:0007669"/>
    <property type="project" value="InterPro"/>
</dbReference>
<dbReference type="GO" id="GO:0048488">
    <property type="term" value="P:synaptic vesicle endocytosis"/>
    <property type="evidence" value="ECO:0000314"/>
    <property type="project" value="SynGO"/>
</dbReference>
<dbReference type="CDD" id="cd00052">
    <property type="entry name" value="EH"/>
    <property type="match status" value="3"/>
</dbReference>
<dbReference type="FunFam" id="1.10.238.10:FF:000026">
    <property type="entry name" value="Epidermal growth factor receptor pathway substrate 15-like 1"/>
    <property type="match status" value="2"/>
</dbReference>
<dbReference type="FunFam" id="1.10.238.10:FF:000074">
    <property type="entry name" value="epidermal growth factor receptor substrate 15 isoform X1"/>
    <property type="match status" value="1"/>
</dbReference>
<dbReference type="FunFam" id="1.10.287.1490:FF:000002">
    <property type="entry name" value="epidermal growth factor receptor substrate 15-like 1 isoform X2"/>
    <property type="match status" value="1"/>
</dbReference>
<dbReference type="Gene3D" id="1.10.287.1490">
    <property type="match status" value="1"/>
</dbReference>
<dbReference type="Gene3D" id="1.10.238.10">
    <property type="entry name" value="EF-hand"/>
    <property type="match status" value="3"/>
</dbReference>
<dbReference type="InterPro" id="IPR011992">
    <property type="entry name" value="EF-hand-dom_pair"/>
</dbReference>
<dbReference type="InterPro" id="IPR018247">
    <property type="entry name" value="EF_Hand_1_Ca_BS"/>
</dbReference>
<dbReference type="InterPro" id="IPR002048">
    <property type="entry name" value="EF_hand_dom"/>
</dbReference>
<dbReference type="InterPro" id="IPR000261">
    <property type="entry name" value="EH_dom"/>
</dbReference>
<dbReference type="InterPro" id="IPR003903">
    <property type="entry name" value="UIM_dom"/>
</dbReference>
<dbReference type="PANTHER" id="PTHR11216">
    <property type="entry name" value="EH DOMAIN"/>
    <property type="match status" value="1"/>
</dbReference>
<dbReference type="PANTHER" id="PTHR11216:SF69">
    <property type="entry name" value="EPIDERMAL GROWTH FACTOR RECEPTOR SUBSTRATE 15-LIKE 1"/>
    <property type="match status" value="1"/>
</dbReference>
<dbReference type="Pfam" id="PF12763">
    <property type="entry name" value="EH"/>
    <property type="match status" value="3"/>
</dbReference>
<dbReference type="SMART" id="SM00054">
    <property type="entry name" value="EFh"/>
    <property type="match status" value="3"/>
</dbReference>
<dbReference type="SMART" id="SM00027">
    <property type="entry name" value="EH"/>
    <property type="match status" value="3"/>
</dbReference>
<dbReference type="SUPFAM" id="SSF47473">
    <property type="entry name" value="EF-hand"/>
    <property type="match status" value="3"/>
</dbReference>
<dbReference type="SUPFAM" id="SSF90257">
    <property type="entry name" value="Myosin rod fragments"/>
    <property type="match status" value="1"/>
</dbReference>
<dbReference type="PROSITE" id="PS00018">
    <property type="entry name" value="EF_HAND_1"/>
    <property type="match status" value="1"/>
</dbReference>
<dbReference type="PROSITE" id="PS50222">
    <property type="entry name" value="EF_HAND_2"/>
    <property type="match status" value="4"/>
</dbReference>
<dbReference type="PROSITE" id="PS50031">
    <property type="entry name" value="EH"/>
    <property type="match status" value="3"/>
</dbReference>
<dbReference type="PROSITE" id="PS50330">
    <property type="entry name" value="UIM"/>
    <property type="match status" value="2"/>
</dbReference>
<accession>Q60902</accession>
<accession>Q3U7L9</accession>
<accession>Q3UIS9</accession>
<accession>Q8CB60</accession>
<accession>Q8CB70</accession>
<accession>Q91WH8</accession>
<name>EP15R_MOUSE</name>
<evidence type="ECO:0000250" key="1"/>
<evidence type="ECO:0000250" key="2">
    <source>
        <dbReference type="UniProtKB" id="Q9UBC2"/>
    </source>
</evidence>
<evidence type="ECO:0000255" key="3"/>
<evidence type="ECO:0000255" key="4">
    <source>
        <dbReference type="PROSITE-ProRule" id="PRU00077"/>
    </source>
</evidence>
<evidence type="ECO:0000255" key="5">
    <source>
        <dbReference type="PROSITE-ProRule" id="PRU00213"/>
    </source>
</evidence>
<evidence type="ECO:0000255" key="6">
    <source>
        <dbReference type="PROSITE-ProRule" id="PRU00448"/>
    </source>
</evidence>
<evidence type="ECO:0000256" key="7">
    <source>
        <dbReference type="SAM" id="MobiDB-lite"/>
    </source>
</evidence>
<evidence type="ECO:0000269" key="8">
    <source>
    </source>
</evidence>
<evidence type="ECO:0000269" key="9">
    <source>
    </source>
</evidence>
<evidence type="ECO:0000269" key="10">
    <source>
    </source>
</evidence>
<evidence type="ECO:0000303" key="11">
    <source>
    </source>
</evidence>
<evidence type="ECO:0000303" key="12">
    <source>
    </source>
</evidence>
<evidence type="ECO:0000305" key="13"/>
<evidence type="ECO:0007744" key="14">
    <source>
    </source>
</evidence>
<evidence type="ECO:0007744" key="15">
    <source>
    </source>
</evidence>
<evidence type="ECO:0007744" key="16">
    <source>
    </source>
</evidence>
<evidence type="ECO:0007744" key="17">
    <source>
    </source>
</evidence>
<evidence type="ECO:0007744" key="18">
    <source>
    </source>
</evidence>
<proteinExistence type="evidence at protein level"/>
<comment type="function">
    <text evidence="1">Seems to be a constitutive component of clathrin-coated pits that is required for receptor-mediated endocytosis. Involved in endocytosis of integrin beta-1 (ITGB1) and transferrin receptor (TFR); internalization of ITGB1 as DAB2-dependent cargo but not TFR seems to require association with DAB2 (By similarity).</text>
</comment>
<comment type="subunit">
    <text evidence="2 8 9 10">Interacts with EPS15, AGFG1/HRB and AGFG2/HRBL. Associates with the clathrin-associated adapter protein complex 2 (AP-2). Interacts with FCHO1 (By similarity). Interacts with FCHO2. Interacts (via EH domains) with DAB2. Interacts with UBQLN1 (via ubiquitin-like domain). Interacts with CAVIN3 (via leucine-zipper domain) (By similarity). Interacts with REPS2 (By similarity).</text>
</comment>
<comment type="interaction">
    <interactant intactId="EBI-443931">
        <id>Q60902</id>
    </interactant>
    <interactant intactId="EBI-1391846">
        <id>P98078</id>
        <label>Dab2</label>
    </interactant>
    <organismsDiffer>false</organismsDiffer>
    <experiments>2</experiments>
</comment>
<comment type="interaction">
    <interactant intactId="EBI-443931">
        <id>Q60902</id>
    </interactant>
    <interactant intactId="EBI-443923">
        <id>P42567</id>
        <label>Eps15</label>
    </interactant>
    <organismsDiffer>false</organismsDiffer>
    <experiments>2</experiments>
</comment>
<comment type="subcellular location">
    <subcellularLocation>
        <location evidence="10">Cell membrane</location>
        <topology evidence="10">Peripheral membrane protein</topology>
    </subcellularLocation>
    <subcellularLocation>
        <location evidence="10">Nucleus</location>
    </subcellularLocation>
    <subcellularLocation>
        <location evidence="10">Membrane</location>
        <location evidence="10">Coated pit</location>
    </subcellularLocation>
    <text>Localized to plasma membrane coated pits.</text>
</comment>
<comment type="alternative products">
    <event type="alternative splicing"/>
    <isoform>
        <id>Q60902-1</id>
        <name>1</name>
        <sequence type="displayed"/>
    </isoform>
    <isoform>
        <id>Q60902-2</id>
        <name>2</name>
        <sequence type="described" ref="VSP_010683 VSP_010684"/>
    </isoform>
    <isoform>
        <id>Q60902-3</id>
        <name>3</name>
        <sequence type="described" ref="VSP_010681 VSP_010682"/>
    </isoform>
    <isoform>
        <id>Q60902-4</id>
        <name>4</name>
        <sequence type="described" ref="VSP_022638 VSP_022639"/>
    </isoform>
</comment>
<comment type="PTM">
    <text evidence="10">Phosphorylated on tyrosine residues by EGFR.</text>
</comment>
<gene>
    <name type="primary">Eps15l1</name>
    <name type="synonym">Eps15-rs</name>
    <name type="synonym">Eps15R</name>
</gene>
<protein>
    <recommendedName>
        <fullName>Epidermal growth factor receptor substrate 15-like 1</fullName>
    </recommendedName>
    <alternativeName>
        <fullName>Epidermal growth factor receptor pathway substrate 15-related sequence</fullName>
        <shortName>Eps15-rs</shortName>
    </alternativeName>
    <alternativeName>
        <fullName>Eps15-related protein</fullName>
        <shortName>Eps15R</shortName>
    </alternativeName>
</protein>
<keyword id="KW-0007">Acetylation</keyword>
<keyword id="KW-0025">Alternative splicing</keyword>
<keyword id="KW-0106">Calcium</keyword>
<keyword id="KW-1003">Cell membrane</keyword>
<keyword id="KW-0168">Coated pit</keyword>
<keyword id="KW-0175">Coiled coil</keyword>
<keyword id="KW-0254">Endocytosis</keyword>
<keyword id="KW-0472">Membrane</keyword>
<keyword id="KW-0479">Metal-binding</keyword>
<keyword id="KW-0539">Nucleus</keyword>
<keyword id="KW-0597">Phosphoprotein</keyword>
<keyword id="KW-1185">Reference proteome</keyword>
<keyword id="KW-0677">Repeat</keyword>